<feature type="chain" id="PRO_1000047051" description="Betaine aldehyde dehydrogenase">
    <location>
        <begin position="1"/>
        <end position="490"/>
    </location>
</feature>
<feature type="active site" description="Charge relay system" evidence="1">
    <location>
        <position position="162"/>
    </location>
</feature>
<feature type="active site" description="Proton acceptor" evidence="1">
    <location>
        <position position="252"/>
    </location>
</feature>
<feature type="active site" description="Nucleophile" evidence="1">
    <location>
        <position position="286"/>
    </location>
</feature>
<feature type="active site" description="Charge relay system" evidence="1">
    <location>
        <position position="464"/>
    </location>
</feature>
<feature type="binding site" evidence="1">
    <location>
        <position position="26"/>
    </location>
    <ligand>
        <name>K(+)</name>
        <dbReference type="ChEBI" id="CHEBI:29103"/>
        <label>1</label>
    </ligand>
</feature>
<feature type="binding site" evidence="1">
    <location>
        <position position="27"/>
    </location>
    <ligand>
        <name>K(+)</name>
        <dbReference type="ChEBI" id="CHEBI:29103"/>
        <label>1</label>
    </ligand>
</feature>
<feature type="binding site" evidence="1">
    <location>
        <position position="93"/>
    </location>
    <ligand>
        <name>K(+)</name>
        <dbReference type="ChEBI" id="CHEBI:29103"/>
        <label>1</label>
    </ligand>
</feature>
<feature type="binding site" evidence="1">
    <location>
        <begin position="150"/>
        <end position="152"/>
    </location>
    <ligand>
        <name>NAD(+)</name>
        <dbReference type="ChEBI" id="CHEBI:57540"/>
    </ligand>
</feature>
<feature type="binding site" evidence="1">
    <location>
        <begin position="176"/>
        <end position="179"/>
    </location>
    <ligand>
        <name>NAD(+)</name>
        <dbReference type="ChEBI" id="CHEBI:57540"/>
    </ligand>
</feature>
<feature type="binding site" evidence="1">
    <location>
        <position position="180"/>
    </location>
    <ligand>
        <name>K(+)</name>
        <dbReference type="ChEBI" id="CHEBI:29103"/>
        <label>1</label>
    </ligand>
</feature>
<feature type="binding site" evidence="1">
    <location>
        <begin position="230"/>
        <end position="233"/>
    </location>
    <ligand>
        <name>NAD(+)</name>
        <dbReference type="ChEBI" id="CHEBI:57540"/>
    </ligand>
</feature>
<feature type="binding site" evidence="1">
    <location>
        <position position="246"/>
    </location>
    <ligand>
        <name>K(+)</name>
        <dbReference type="ChEBI" id="CHEBI:29103"/>
        <label>2</label>
    </ligand>
</feature>
<feature type="binding site" evidence="1">
    <location>
        <position position="254"/>
    </location>
    <ligand>
        <name>NAD(+)</name>
        <dbReference type="ChEBI" id="CHEBI:57540"/>
    </ligand>
</feature>
<feature type="binding site" description="covalent" evidence="1">
    <location>
        <position position="286"/>
    </location>
    <ligand>
        <name>NAD(+)</name>
        <dbReference type="ChEBI" id="CHEBI:57540"/>
    </ligand>
</feature>
<feature type="binding site" evidence="1">
    <location>
        <position position="387"/>
    </location>
    <ligand>
        <name>NAD(+)</name>
        <dbReference type="ChEBI" id="CHEBI:57540"/>
    </ligand>
</feature>
<feature type="binding site" evidence="1">
    <location>
        <position position="457"/>
    </location>
    <ligand>
        <name>K(+)</name>
        <dbReference type="ChEBI" id="CHEBI:29103"/>
        <label>2</label>
    </ligand>
</feature>
<feature type="binding site" evidence="1">
    <location>
        <position position="460"/>
    </location>
    <ligand>
        <name>K(+)</name>
        <dbReference type="ChEBI" id="CHEBI:29103"/>
        <label>2</label>
    </ligand>
</feature>
<feature type="site" description="Seems to be a necessary countercharge to the potassium cations" evidence="1">
    <location>
        <position position="248"/>
    </location>
</feature>
<feature type="modified residue" description="Cysteine sulfenic acid (-SOH)" evidence="1">
    <location>
        <position position="286"/>
    </location>
</feature>
<comment type="function">
    <text evidence="1">Involved in the biosynthesis of the osmoprotectant glycine betaine. Catalyzes the irreversible oxidation of betaine aldehyde to the corresponding acid.</text>
</comment>
<comment type="catalytic activity">
    <reaction evidence="1">
        <text>betaine aldehyde + NAD(+) + H2O = glycine betaine + NADH + 2 H(+)</text>
        <dbReference type="Rhea" id="RHEA:15305"/>
        <dbReference type="ChEBI" id="CHEBI:15377"/>
        <dbReference type="ChEBI" id="CHEBI:15378"/>
        <dbReference type="ChEBI" id="CHEBI:15710"/>
        <dbReference type="ChEBI" id="CHEBI:17750"/>
        <dbReference type="ChEBI" id="CHEBI:57540"/>
        <dbReference type="ChEBI" id="CHEBI:57945"/>
        <dbReference type="EC" id="1.2.1.8"/>
    </reaction>
    <physiologicalReaction direction="left-to-right" evidence="1">
        <dbReference type="Rhea" id="RHEA:15306"/>
    </physiologicalReaction>
</comment>
<comment type="cofactor">
    <cofactor evidence="1">
        <name>K(+)</name>
        <dbReference type="ChEBI" id="CHEBI:29103"/>
    </cofactor>
    <text evidence="1">Binds 2 potassium ions per subunit.</text>
</comment>
<comment type="pathway">
    <text evidence="1">Amine and polyamine biosynthesis; betaine biosynthesis via choline pathway; betaine from betaine aldehyde: step 1/1.</text>
</comment>
<comment type="subunit">
    <text evidence="1">Dimer of dimers.</text>
</comment>
<comment type="similarity">
    <text evidence="1">Belongs to the aldehyde dehydrogenase family.</text>
</comment>
<reference key="1">
    <citation type="journal article" date="2008" name="Proc. Natl. Acad. Sci. U.S.A.">
        <title>Nitrogen fixation island and rhizosphere competence traits in the genome of root-associated Pseudomonas stutzeri A1501.</title>
        <authorList>
            <person name="Yan Y."/>
            <person name="Yang J."/>
            <person name="Dou Y."/>
            <person name="Chen M."/>
            <person name="Ping S."/>
            <person name="Peng J."/>
            <person name="Lu W."/>
            <person name="Zhang W."/>
            <person name="Yao Z."/>
            <person name="Li H."/>
            <person name="Liu W."/>
            <person name="He S."/>
            <person name="Geng L."/>
            <person name="Zhang X."/>
            <person name="Yang F."/>
            <person name="Yu H."/>
            <person name="Zhan Y."/>
            <person name="Li D."/>
            <person name="Lin Z."/>
            <person name="Wang Y."/>
            <person name="Elmerich C."/>
            <person name="Lin M."/>
            <person name="Jin Q."/>
        </authorList>
    </citation>
    <scope>NUCLEOTIDE SEQUENCE [LARGE SCALE GENOMIC DNA]</scope>
    <source>
        <strain>A1501</strain>
    </source>
</reference>
<gene>
    <name evidence="1" type="primary">betB</name>
    <name type="ordered locus">PST_1745</name>
</gene>
<protein>
    <recommendedName>
        <fullName evidence="1">Betaine aldehyde dehydrogenase</fullName>
        <shortName evidence="1">BADH</shortName>
        <ecNumber evidence="1">1.2.1.8</ecNumber>
    </recommendedName>
</protein>
<keyword id="KW-0479">Metal-binding</keyword>
<keyword id="KW-0520">NAD</keyword>
<keyword id="KW-0521">NADP</keyword>
<keyword id="KW-0558">Oxidation</keyword>
<keyword id="KW-0560">Oxidoreductase</keyword>
<keyword id="KW-0630">Potassium</keyword>
<keyword id="KW-1185">Reference proteome</keyword>
<proteinExistence type="inferred from homology"/>
<name>BETB_STUS1</name>
<dbReference type="EC" id="1.2.1.8" evidence="1"/>
<dbReference type="EMBL" id="CP000304">
    <property type="protein sequence ID" value="ABP79423.1"/>
    <property type="molecule type" value="Genomic_DNA"/>
</dbReference>
<dbReference type="RefSeq" id="WP_011912900.1">
    <property type="nucleotide sequence ID" value="NC_009434.1"/>
</dbReference>
<dbReference type="SMR" id="A4VKC2"/>
<dbReference type="KEGG" id="psa:PST_1745"/>
<dbReference type="eggNOG" id="COG1012">
    <property type="taxonomic scope" value="Bacteria"/>
</dbReference>
<dbReference type="HOGENOM" id="CLU_005391_0_0_6"/>
<dbReference type="UniPathway" id="UPA00529">
    <property type="reaction ID" value="UER00386"/>
</dbReference>
<dbReference type="Proteomes" id="UP000000233">
    <property type="component" value="Chromosome"/>
</dbReference>
<dbReference type="GO" id="GO:0008802">
    <property type="term" value="F:betaine-aldehyde dehydrogenase (NAD+) activity"/>
    <property type="evidence" value="ECO:0007669"/>
    <property type="project" value="UniProtKB-UniRule"/>
</dbReference>
<dbReference type="GO" id="GO:0046872">
    <property type="term" value="F:metal ion binding"/>
    <property type="evidence" value="ECO:0007669"/>
    <property type="project" value="UniProtKB-KW"/>
</dbReference>
<dbReference type="GO" id="GO:0019285">
    <property type="term" value="P:glycine betaine biosynthetic process from choline"/>
    <property type="evidence" value="ECO:0007669"/>
    <property type="project" value="UniProtKB-UniRule"/>
</dbReference>
<dbReference type="CDD" id="cd07090">
    <property type="entry name" value="ALDH_F9_TMBADH"/>
    <property type="match status" value="1"/>
</dbReference>
<dbReference type="FunFam" id="3.40.605.10:FF:000026">
    <property type="entry name" value="Aldehyde dehydrogenase, putative"/>
    <property type="match status" value="1"/>
</dbReference>
<dbReference type="FunFam" id="3.40.309.10:FF:000014">
    <property type="entry name" value="NAD/NADP-dependent betaine aldehyde dehydrogenase"/>
    <property type="match status" value="1"/>
</dbReference>
<dbReference type="FunFam" id="3.40.605.10:FF:000007">
    <property type="entry name" value="NAD/NADP-dependent betaine aldehyde dehydrogenase"/>
    <property type="match status" value="1"/>
</dbReference>
<dbReference type="Gene3D" id="3.40.605.10">
    <property type="entry name" value="Aldehyde Dehydrogenase, Chain A, domain 1"/>
    <property type="match status" value="1"/>
</dbReference>
<dbReference type="Gene3D" id="3.40.309.10">
    <property type="entry name" value="Aldehyde Dehydrogenase, Chain A, domain 2"/>
    <property type="match status" value="1"/>
</dbReference>
<dbReference type="HAMAP" id="MF_00804">
    <property type="entry name" value="BADH"/>
    <property type="match status" value="1"/>
</dbReference>
<dbReference type="InterPro" id="IPR016161">
    <property type="entry name" value="Ald_DH/histidinol_DH"/>
</dbReference>
<dbReference type="InterPro" id="IPR016163">
    <property type="entry name" value="Ald_DH_C"/>
</dbReference>
<dbReference type="InterPro" id="IPR016160">
    <property type="entry name" value="Ald_DH_CS_CYS"/>
</dbReference>
<dbReference type="InterPro" id="IPR029510">
    <property type="entry name" value="Ald_DH_CS_GLU"/>
</dbReference>
<dbReference type="InterPro" id="IPR016162">
    <property type="entry name" value="Ald_DH_N"/>
</dbReference>
<dbReference type="InterPro" id="IPR015590">
    <property type="entry name" value="Aldehyde_DH_dom"/>
</dbReference>
<dbReference type="InterPro" id="IPR011264">
    <property type="entry name" value="BADH"/>
</dbReference>
<dbReference type="NCBIfam" id="TIGR01804">
    <property type="entry name" value="BADH"/>
    <property type="match status" value="1"/>
</dbReference>
<dbReference type="NCBIfam" id="NF009725">
    <property type="entry name" value="PRK13252.1"/>
    <property type="match status" value="1"/>
</dbReference>
<dbReference type="PANTHER" id="PTHR11699">
    <property type="entry name" value="ALDEHYDE DEHYDROGENASE-RELATED"/>
    <property type="match status" value="1"/>
</dbReference>
<dbReference type="Pfam" id="PF00171">
    <property type="entry name" value="Aldedh"/>
    <property type="match status" value="1"/>
</dbReference>
<dbReference type="SUPFAM" id="SSF53720">
    <property type="entry name" value="ALDH-like"/>
    <property type="match status" value="1"/>
</dbReference>
<dbReference type="PROSITE" id="PS00070">
    <property type="entry name" value="ALDEHYDE_DEHYDR_CYS"/>
    <property type="match status" value="1"/>
</dbReference>
<dbReference type="PROSITE" id="PS00687">
    <property type="entry name" value="ALDEHYDE_DEHYDR_GLU"/>
    <property type="match status" value="1"/>
</dbReference>
<sequence>MARFPRQQLYIHGAYVDASSNQTFESINPANGEVLAEVAEAGAADLERAVESAEQGQRIWAALTGIERARIMRRAVDLLRERNDELALLETLDTGKPLSETRSVDIITGADVLEYYAGLAPAIEGEQIPLRDSSFVYTRREPLGVVAGIGAWNYPIQIALWKAAPALAAGNAMIFKPSEVTPLSALRLAEIFSEAGLPDGVFNVLTGSGAGVGALITEHPRIAKVSFTGGVATGKKVMASAAGSSLKDVTMELGGKSPLIVCEDADLDRAADIAVMANFFSSGQVCTNGTRVFIPAGLKASFEAKLLERVQRVRLGDPQQEATNFGPLVSFAHMDKVLDYIAQGKAAGARILCGGERVTEGEYARGAFVAPTIFSDCSDDMSIVREEIFGPVLSLLEYQGEDEAIRRANDTEYGLAAGVVTPDLARAHRIIHRLEAGICWINTWGESPAQMPVGGYKQSGIGRENGIASLAHYTRVKSVQVELGEFASVF</sequence>
<accession>A4VKC2</accession>
<evidence type="ECO:0000255" key="1">
    <source>
        <dbReference type="HAMAP-Rule" id="MF_00804"/>
    </source>
</evidence>
<organism>
    <name type="scientific">Stutzerimonas stutzeri (strain A1501)</name>
    <name type="common">Pseudomonas stutzeri</name>
    <dbReference type="NCBI Taxonomy" id="379731"/>
    <lineage>
        <taxon>Bacteria</taxon>
        <taxon>Pseudomonadati</taxon>
        <taxon>Pseudomonadota</taxon>
        <taxon>Gammaproteobacteria</taxon>
        <taxon>Pseudomonadales</taxon>
        <taxon>Pseudomonadaceae</taxon>
        <taxon>Stutzerimonas</taxon>
    </lineage>
</organism>